<accession>A6L078</accession>
<sequence>MSEAKQIYHVPVLLNESVDGMNIQPGGIYVDATFGGGGHSKEILSRLDSTAHLYSFDQDEDAEKNIVSDSRFTFVRSNFRYLPNFLRYYGVEGVDAILADLGVSSHHFDDSERGFSFRFEGKLDMRMNKRAGMTAADVVNTYDEERLANIFYLYGELKNSRKLASAIVKARGVKQIVTIGDFLEVIKPLFGREREKKELAKVFQALRIEVNQEMEALKEMLYAATKALKPGGRLVVITYHSLEDRMVKNIMKTGNIEGKAEQDFFGNVQTPFKLVNNKVIVAGNEEVTRNPRSRSAKLRIAEKR</sequence>
<organism>
    <name type="scientific">Phocaeicola vulgatus (strain ATCC 8482 / DSM 1447 / JCM 5826 / CCUG 4940 / NBRC 14291 / NCTC 11154)</name>
    <name type="common">Bacteroides vulgatus</name>
    <dbReference type="NCBI Taxonomy" id="435590"/>
    <lineage>
        <taxon>Bacteria</taxon>
        <taxon>Pseudomonadati</taxon>
        <taxon>Bacteroidota</taxon>
        <taxon>Bacteroidia</taxon>
        <taxon>Bacteroidales</taxon>
        <taxon>Bacteroidaceae</taxon>
        <taxon>Phocaeicola</taxon>
    </lineage>
</organism>
<evidence type="ECO:0000255" key="1">
    <source>
        <dbReference type="HAMAP-Rule" id="MF_01007"/>
    </source>
</evidence>
<keyword id="KW-0963">Cytoplasm</keyword>
<keyword id="KW-0489">Methyltransferase</keyword>
<keyword id="KW-0698">rRNA processing</keyword>
<keyword id="KW-0949">S-adenosyl-L-methionine</keyword>
<keyword id="KW-0808">Transferase</keyword>
<gene>
    <name evidence="1" type="primary">rsmH</name>
    <name type="synonym">mraW</name>
    <name type="ordered locus">BVU_1404</name>
</gene>
<dbReference type="EC" id="2.1.1.199" evidence="1"/>
<dbReference type="EMBL" id="CP000139">
    <property type="protein sequence ID" value="ABR39092.1"/>
    <property type="molecule type" value="Genomic_DNA"/>
</dbReference>
<dbReference type="RefSeq" id="WP_005845329.1">
    <property type="nucleotide sequence ID" value="NC_009614.1"/>
</dbReference>
<dbReference type="SMR" id="A6L078"/>
<dbReference type="STRING" id="435590.BVU_1404"/>
<dbReference type="PaxDb" id="435590-BVU_1404"/>
<dbReference type="GeneID" id="5302370"/>
<dbReference type="KEGG" id="bvu:BVU_1404"/>
<dbReference type="eggNOG" id="COG0275">
    <property type="taxonomic scope" value="Bacteria"/>
</dbReference>
<dbReference type="HOGENOM" id="CLU_038422_2_0_10"/>
<dbReference type="BioCyc" id="BVUL435590:G1G59-1467-MONOMER"/>
<dbReference type="Proteomes" id="UP000002861">
    <property type="component" value="Chromosome"/>
</dbReference>
<dbReference type="GO" id="GO:0005737">
    <property type="term" value="C:cytoplasm"/>
    <property type="evidence" value="ECO:0007669"/>
    <property type="project" value="UniProtKB-SubCell"/>
</dbReference>
<dbReference type="GO" id="GO:0071424">
    <property type="term" value="F:rRNA (cytosine-N4-)-methyltransferase activity"/>
    <property type="evidence" value="ECO:0007669"/>
    <property type="project" value="UniProtKB-UniRule"/>
</dbReference>
<dbReference type="GO" id="GO:0070475">
    <property type="term" value="P:rRNA base methylation"/>
    <property type="evidence" value="ECO:0007669"/>
    <property type="project" value="UniProtKB-UniRule"/>
</dbReference>
<dbReference type="FunFam" id="1.10.150.170:FF:000003">
    <property type="entry name" value="Ribosomal RNA small subunit methyltransferase H"/>
    <property type="match status" value="1"/>
</dbReference>
<dbReference type="Gene3D" id="1.10.150.170">
    <property type="entry name" value="Putative methyltransferase TM0872, insert domain"/>
    <property type="match status" value="1"/>
</dbReference>
<dbReference type="Gene3D" id="3.40.50.150">
    <property type="entry name" value="Vaccinia Virus protein VP39"/>
    <property type="match status" value="1"/>
</dbReference>
<dbReference type="HAMAP" id="MF_01007">
    <property type="entry name" value="16SrRNA_methyltr_H"/>
    <property type="match status" value="1"/>
</dbReference>
<dbReference type="InterPro" id="IPR002903">
    <property type="entry name" value="RsmH"/>
</dbReference>
<dbReference type="InterPro" id="IPR023397">
    <property type="entry name" value="SAM-dep_MeTrfase_MraW_recog"/>
</dbReference>
<dbReference type="InterPro" id="IPR029063">
    <property type="entry name" value="SAM-dependent_MTases_sf"/>
</dbReference>
<dbReference type="NCBIfam" id="TIGR00006">
    <property type="entry name" value="16S rRNA (cytosine(1402)-N(4))-methyltransferase RsmH"/>
    <property type="match status" value="1"/>
</dbReference>
<dbReference type="PANTHER" id="PTHR11265:SF0">
    <property type="entry name" value="12S RRNA N4-METHYLCYTIDINE METHYLTRANSFERASE"/>
    <property type="match status" value="1"/>
</dbReference>
<dbReference type="PANTHER" id="PTHR11265">
    <property type="entry name" value="S-ADENOSYL-METHYLTRANSFERASE MRAW"/>
    <property type="match status" value="1"/>
</dbReference>
<dbReference type="Pfam" id="PF01795">
    <property type="entry name" value="Methyltransf_5"/>
    <property type="match status" value="1"/>
</dbReference>
<dbReference type="PIRSF" id="PIRSF004486">
    <property type="entry name" value="MraW"/>
    <property type="match status" value="1"/>
</dbReference>
<dbReference type="SUPFAM" id="SSF81799">
    <property type="entry name" value="Putative methyltransferase TM0872, insert domain"/>
    <property type="match status" value="1"/>
</dbReference>
<dbReference type="SUPFAM" id="SSF53335">
    <property type="entry name" value="S-adenosyl-L-methionine-dependent methyltransferases"/>
    <property type="match status" value="1"/>
</dbReference>
<reference key="1">
    <citation type="journal article" date="2007" name="PLoS Biol.">
        <title>Evolution of symbiotic bacteria in the distal human intestine.</title>
        <authorList>
            <person name="Xu J."/>
            <person name="Mahowald M.A."/>
            <person name="Ley R.E."/>
            <person name="Lozupone C.A."/>
            <person name="Hamady M."/>
            <person name="Martens E.C."/>
            <person name="Henrissat B."/>
            <person name="Coutinho P.M."/>
            <person name="Minx P."/>
            <person name="Latreille P."/>
            <person name="Cordum H."/>
            <person name="Van Brunt A."/>
            <person name="Kim K."/>
            <person name="Fulton R.S."/>
            <person name="Fulton L.A."/>
            <person name="Clifton S.W."/>
            <person name="Wilson R.K."/>
            <person name="Knight R.D."/>
            <person name="Gordon J.I."/>
        </authorList>
    </citation>
    <scope>NUCLEOTIDE SEQUENCE [LARGE SCALE GENOMIC DNA]</scope>
    <source>
        <strain>ATCC 8482 / DSM 1447 / JCM 5826 / CCUG 4940 / NBRC 14291 / NCTC 11154</strain>
    </source>
</reference>
<feature type="chain" id="PRO_0000386738" description="Ribosomal RNA small subunit methyltransferase H">
    <location>
        <begin position="1"/>
        <end position="304"/>
    </location>
</feature>
<feature type="binding site" evidence="1">
    <location>
        <begin position="37"/>
        <end position="39"/>
    </location>
    <ligand>
        <name>S-adenosyl-L-methionine</name>
        <dbReference type="ChEBI" id="CHEBI:59789"/>
    </ligand>
</feature>
<feature type="binding site" evidence="1">
    <location>
        <position position="57"/>
    </location>
    <ligand>
        <name>S-adenosyl-L-methionine</name>
        <dbReference type="ChEBI" id="CHEBI:59789"/>
    </ligand>
</feature>
<feature type="binding site" evidence="1">
    <location>
        <position position="79"/>
    </location>
    <ligand>
        <name>S-adenosyl-L-methionine</name>
        <dbReference type="ChEBI" id="CHEBI:59789"/>
    </ligand>
</feature>
<feature type="binding site" evidence="1">
    <location>
        <position position="100"/>
    </location>
    <ligand>
        <name>S-adenosyl-L-methionine</name>
        <dbReference type="ChEBI" id="CHEBI:59789"/>
    </ligand>
</feature>
<feature type="binding site" evidence="1">
    <location>
        <position position="107"/>
    </location>
    <ligand>
        <name>S-adenosyl-L-methionine</name>
        <dbReference type="ChEBI" id="CHEBI:59789"/>
    </ligand>
</feature>
<comment type="function">
    <text evidence="1">Specifically methylates the N4 position of cytidine in position 1402 (C1402) of 16S rRNA.</text>
</comment>
<comment type="catalytic activity">
    <reaction evidence="1">
        <text>cytidine(1402) in 16S rRNA + S-adenosyl-L-methionine = N(4)-methylcytidine(1402) in 16S rRNA + S-adenosyl-L-homocysteine + H(+)</text>
        <dbReference type="Rhea" id="RHEA:42928"/>
        <dbReference type="Rhea" id="RHEA-COMP:10286"/>
        <dbReference type="Rhea" id="RHEA-COMP:10287"/>
        <dbReference type="ChEBI" id="CHEBI:15378"/>
        <dbReference type="ChEBI" id="CHEBI:57856"/>
        <dbReference type="ChEBI" id="CHEBI:59789"/>
        <dbReference type="ChEBI" id="CHEBI:74506"/>
        <dbReference type="ChEBI" id="CHEBI:82748"/>
        <dbReference type="EC" id="2.1.1.199"/>
    </reaction>
</comment>
<comment type="subcellular location">
    <subcellularLocation>
        <location evidence="1">Cytoplasm</location>
    </subcellularLocation>
</comment>
<comment type="similarity">
    <text evidence="1">Belongs to the methyltransferase superfamily. RsmH family.</text>
</comment>
<name>RSMH_PHOV8</name>
<proteinExistence type="inferred from homology"/>
<protein>
    <recommendedName>
        <fullName evidence="1">Ribosomal RNA small subunit methyltransferase H</fullName>
        <ecNumber evidence="1">2.1.1.199</ecNumber>
    </recommendedName>
    <alternativeName>
        <fullName evidence="1">16S rRNA m(4)C1402 methyltransferase</fullName>
    </alternativeName>
    <alternativeName>
        <fullName evidence="1">rRNA (cytosine-N(4)-)-methyltransferase RsmH</fullName>
    </alternativeName>
</protein>